<name>GLPK_PARC0</name>
<comment type="function">
    <text evidence="1">Key enzyme in the regulation of glycerol uptake and metabolism. Catalyzes the phosphorylation of glycerol to yield sn-glycerol 3-phosphate.</text>
</comment>
<comment type="catalytic activity">
    <reaction evidence="1">
        <text>glycerol + ATP = sn-glycerol 3-phosphate + ADP + H(+)</text>
        <dbReference type="Rhea" id="RHEA:21644"/>
        <dbReference type="ChEBI" id="CHEBI:15378"/>
        <dbReference type="ChEBI" id="CHEBI:17754"/>
        <dbReference type="ChEBI" id="CHEBI:30616"/>
        <dbReference type="ChEBI" id="CHEBI:57597"/>
        <dbReference type="ChEBI" id="CHEBI:456216"/>
        <dbReference type="EC" id="2.7.1.30"/>
    </reaction>
</comment>
<comment type="activity regulation">
    <text evidence="1">Inhibited by fructose 1,6-bisphosphate (FBP).</text>
</comment>
<comment type="pathway">
    <text evidence="1">Polyol metabolism; glycerol degradation via glycerol kinase pathway; sn-glycerol 3-phosphate from glycerol: step 1/1.</text>
</comment>
<comment type="similarity">
    <text evidence="1">Belongs to the FGGY kinase family.</text>
</comment>
<protein>
    <recommendedName>
        <fullName evidence="1">Glycerol kinase</fullName>
        <ecNumber evidence="1">2.7.1.30</ecNumber>
    </recommendedName>
    <alternativeName>
        <fullName evidence="1">ATP:glycerol 3-phosphotransferase</fullName>
    </alternativeName>
    <alternativeName>
        <fullName evidence="1">Glycerokinase</fullName>
        <shortName evidence="1">GK</shortName>
    </alternativeName>
</protein>
<dbReference type="EC" id="2.7.1.30" evidence="1"/>
<dbReference type="EMBL" id="CP000512">
    <property type="protein sequence ID" value="ABM31206.1"/>
    <property type="molecule type" value="Genomic_DNA"/>
</dbReference>
<dbReference type="RefSeq" id="WP_011793777.1">
    <property type="nucleotide sequence ID" value="NC_008752.1"/>
</dbReference>
<dbReference type="SMR" id="A1TJR8"/>
<dbReference type="STRING" id="397945.Aave_0602"/>
<dbReference type="KEGG" id="aav:Aave_0602"/>
<dbReference type="eggNOG" id="COG0554">
    <property type="taxonomic scope" value="Bacteria"/>
</dbReference>
<dbReference type="HOGENOM" id="CLU_009281_2_3_4"/>
<dbReference type="OrthoDB" id="9805576at2"/>
<dbReference type="UniPathway" id="UPA00618">
    <property type="reaction ID" value="UER00672"/>
</dbReference>
<dbReference type="Proteomes" id="UP000002596">
    <property type="component" value="Chromosome"/>
</dbReference>
<dbReference type="GO" id="GO:0005829">
    <property type="term" value="C:cytosol"/>
    <property type="evidence" value="ECO:0007669"/>
    <property type="project" value="TreeGrafter"/>
</dbReference>
<dbReference type="GO" id="GO:0005524">
    <property type="term" value="F:ATP binding"/>
    <property type="evidence" value="ECO:0007669"/>
    <property type="project" value="UniProtKB-UniRule"/>
</dbReference>
<dbReference type="GO" id="GO:0004370">
    <property type="term" value="F:glycerol kinase activity"/>
    <property type="evidence" value="ECO:0000250"/>
    <property type="project" value="UniProtKB"/>
</dbReference>
<dbReference type="GO" id="GO:0019563">
    <property type="term" value="P:glycerol catabolic process"/>
    <property type="evidence" value="ECO:0007669"/>
    <property type="project" value="UniProtKB-UniRule"/>
</dbReference>
<dbReference type="GO" id="GO:0006071">
    <property type="term" value="P:glycerol metabolic process"/>
    <property type="evidence" value="ECO:0000250"/>
    <property type="project" value="UniProtKB"/>
</dbReference>
<dbReference type="GO" id="GO:0006072">
    <property type="term" value="P:glycerol-3-phosphate metabolic process"/>
    <property type="evidence" value="ECO:0007669"/>
    <property type="project" value="InterPro"/>
</dbReference>
<dbReference type="CDD" id="cd07786">
    <property type="entry name" value="FGGY_EcGK_like"/>
    <property type="match status" value="1"/>
</dbReference>
<dbReference type="FunFam" id="3.30.420.40:FF:000007">
    <property type="entry name" value="Glycerol kinase"/>
    <property type="match status" value="1"/>
</dbReference>
<dbReference type="FunFam" id="3.30.420.40:FF:000008">
    <property type="entry name" value="Glycerol kinase"/>
    <property type="match status" value="1"/>
</dbReference>
<dbReference type="Gene3D" id="3.30.420.40">
    <property type="match status" value="2"/>
</dbReference>
<dbReference type="HAMAP" id="MF_00186">
    <property type="entry name" value="Glycerol_kin"/>
    <property type="match status" value="1"/>
</dbReference>
<dbReference type="InterPro" id="IPR043129">
    <property type="entry name" value="ATPase_NBD"/>
</dbReference>
<dbReference type="InterPro" id="IPR000577">
    <property type="entry name" value="Carb_kinase_FGGY"/>
</dbReference>
<dbReference type="InterPro" id="IPR018483">
    <property type="entry name" value="Carb_kinase_FGGY_CS"/>
</dbReference>
<dbReference type="InterPro" id="IPR018485">
    <property type="entry name" value="FGGY_C"/>
</dbReference>
<dbReference type="InterPro" id="IPR018484">
    <property type="entry name" value="FGGY_N"/>
</dbReference>
<dbReference type="InterPro" id="IPR005999">
    <property type="entry name" value="Glycerol_kin"/>
</dbReference>
<dbReference type="NCBIfam" id="TIGR01311">
    <property type="entry name" value="glycerol_kin"/>
    <property type="match status" value="1"/>
</dbReference>
<dbReference type="NCBIfam" id="NF000756">
    <property type="entry name" value="PRK00047.1"/>
    <property type="match status" value="1"/>
</dbReference>
<dbReference type="PANTHER" id="PTHR10196:SF69">
    <property type="entry name" value="GLYCEROL KINASE"/>
    <property type="match status" value="1"/>
</dbReference>
<dbReference type="PANTHER" id="PTHR10196">
    <property type="entry name" value="SUGAR KINASE"/>
    <property type="match status" value="1"/>
</dbReference>
<dbReference type="Pfam" id="PF02782">
    <property type="entry name" value="FGGY_C"/>
    <property type="match status" value="1"/>
</dbReference>
<dbReference type="Pfam" id="PF00370">
    <property type="entry name" value="FGGY_N"/>
    <property type="match status" value="1"/>
</dbReference>
<dbReference type="PIRSF" id="PIRSF000538">
    <property type="entry name" value="GlpK"/>
    <property type="match status" value="1"/>
</dbReference>
<dbReference type="SUPFAM" id="SSF53067">
    <property type="entry name" value="Actin-like ATPase domain"/>
    <property type="match status" value="2"/>
</dbReference>
<dbReference type="PROSITE" id="PS00933">
    <property type="entry name" value="FGGY_KINASES_1"/>
    <property type="match status" value="1"/>
</dbReference>
<dbReference type="PROSITE" id="PS00445">
    <property type="entry name" value="FGGY_KINASES_2"/>
    <property type="match status" value="1"/>
</dbReference>
<organism>
    <name type="scientific">Paracidovorax citrulli (strain AAC00-1)</name>
    <name type="common">Acidovorax citrulli</name>
    <dbReference type="NCBI Taxonomy" id="397945"/>
    <lineage>
        <taxon>Bacteria</taxon>
        <taxon>Pseudomonadati</taxon>
        <taxon>Pseudomonadota</taxon>
        <taxon>Betaproteobacteria</taxon>
        <taxon>Burkholderiales</taxon>
        <taxon>Comamonadaceae</taxon>
        <taxon>Paracidovorax</taxon>
    </lineage>
</organism>
<proteinExistence type="inferred from homology"/>
<sequence length="506" mass="53912">MTYLLALDQGTSSSRSIVFDERGHIVAQAQQELPQIYPQPGWVEHDPVDIWRTQIATARQALAQANIGPGDVRALGITNQRETTVLWNRRTGQPVHHAIVWQDRRAEPLCAELREQGHEPMIQERTGLRIDAYFSATKLRWLLDQVPGARAAAEAGELAFGTVDSWLIWQLTGGKVHVTDVSNASRTMLFNVHSNDWDDDLLALLRIPRKLLPRVQPSASDFGATDAALLGGAIPIGGVAGDQQSALFGQACFTAGMAKNTYGTGCFMLMHTGSSFQTSRNGLLTTSAAQIAPRTGAGHGAPEPAFAMEGSVFVGGAVVQWLRDGLRAISSSSEVQSLAESVPDSGGVMMVPAFTGLGAPYWKPDARGTITGLTRGTTIAHIARAALESIAYQSAALLQAMSRDAVAAGGAPVSELRVDGGACVNDLLMQFQADLLGIPVVRPAVIETTALGAAYLAGLSSGVYAGTEALSALWRAERRFLPTLSAARAQECMARWEHAVRQAALD</sequence>
<feature type="chain" id="PRO_1000098708" description="Glycerol kinase">
    <location>
        <begin position="1"/>
        <end position="506"/>
    </location>
</feature>
<feature type="binding site" evidence="1">
    <location>
        <position position="11"/>
    </location>
    <ligand>
        <name>ADP</name>
        <dbReference type="ChEBI" id="CHEBI:456216"/>
    </ligand>
</feature>
<feature type="binding site" evidence="1">
    <location>
        <position position="11"/>
    </location>
    <ligand>
        <name>ATP</name>
        <dbReference type="ChEBI" id="CHEBI:30616"/>
    </ligand>
</feature>
<feature type="binding site" evidence="1">
    <location>
        <position position="11"/>
    </location>
    <ligand>
        <name>sn-glycerol 3-phosphate</name>
        <dbReference type="ChEBI" id="CHEBI:57597"/>
    </ligand>
</feature>
<feature type="binding site" evidence="1">
    <location>
        <position position="12"/>
    </location>
    <ligand>
        <name>ATP</name>
        <dbReference type="ChEBI" id="CHEBI:30616"/>
    </ligand>
</feature>
<feature type="binding site" evidence="1">
    <location>
        <position position="13"/>
    </location>
    <ligand>
        <name>ATP</name>
        <dbReference type="ChEBI" id="CHEBI:30616"/>
    </ligand>
</feature>
<feature type="binding site" evidence="1">
    <location>
        <position position="15"/>
    </location>
    <ligand>
        <name>ADP</name>
        <dbReference type="ChEBI" id="CHEBI:456216"/>
    </ligand>
</feature>
<feature type="binding site" evidence="1">
    <location>
        <position position="81"/>
    </location>
    <ligand>
        <name>glycerol</name>
        <dbReference type="ChEBI" id="CHEBI:17754"/>
    </ligand>
</feature>
<feature type="binding site" evidence="1">
    <location>
        <position position="81"/>
    </location>
    <ligand>
        <name>sn-glycerol 3-phosphate</name>
        <dbReference type="ChEBI" id="CHEBI:57597"/>
    </ligand>
</feature>
<feature type="binding site" evidence="1">
    <location>
        <position position="82"/>
    </location>
    <ligand>
        <name>glycerol</name>
        <dbReference type="ChEBI" id="CHEBI:17754"/>
    </ligand>
</feature>
<feature type="binding site" evidence="1">
    <location>
        <position position="82"/>
    </location>
    <ligand>
        <name>sn-glycerol 3-phosphate</name>
        <dbReference type="ChEBI" id="CHEBI:57597"/>
    </ligand>
</feature>
<feature type="binding site" evidence="1">
    <location>
        <position position="133"/>
    </location>
    <ligand>
        <name>glycerol</name>
        <dbReference type="ChEBI" id="CHEBI:17754"/>
    </ligand>
</feature>
<feature type="binding site" evidence="1">
    <location>
        <position position="133"/>
    </location>
    <ligand>
        <name>sn-glycerol 3-phosphate</name>
        <dbReference type="ChEBI" id="CHEBI:57597"/>
    </ligand>
</feature>
<feature type="binding site" evidence="1">
    <location>
        <position position="242"/>
    </location>
    <ligand>
        <name>glycerol</name>
        <dbReference type="ChEBI" id="CHEBI:17754"/>
    </ligand>
</feature>
<feature type="binding site" evidence="1">
    <location>
        <position position="242"/>
    </location>
    <ligand>
        <name>sn-glycerol 3-phosphate</name>
        <dbReference type="ChEBI" id="CHEBI:57597"/>
    </ligand>
</feature>
<feature type="binding site" evidence="1">
    <location>
        <position position="243"/>
    </location>
    <ligand>
        <name>glycerol</name>
        <dbReference type="ChEBI" id="CHEBI:17754"/>
    </ligand>
</feature>
<feature type="binding site" evidence="1">
    <location>
        <position position="264"/>
    </location>
    <ligand>
        <name>ADP</name>
        <dbReference type="ChEBI" id="CHEBI:456216"/>
    </ligand>
</feature>
<feature type="binding site" evidence="1">
    <location>
        <position position="264"/>
    </location>
    <ligand>
        <name>ATP</name>
        <dbReference type="ChEBI" id="CHEBI:30616"/>
    </ligand>
</feature>
<feature type="binding site" evidence="1">
    <location>
        <position position="316"/>
    </location>
    <ligand>
        <name>ADP</name>
        <dbReference type="ChEBI" id="CHEBI:456216"/>
    </ligand>
</feature>
<feature type="binding site" evidence="1">
    <location>
        <position position="316"/>
    </location>
    <ligand>
        <name>ATP</name>
        <dbReference type="ChEBI" id="CHEBI:30616"/>
    </ligand>
</feature>
<feature type="binding site" evidence="1">
    <location>
        <position position="320"/>
    </location>
    <ligand>
        <name>ATP</name>
        <dbReference type="ChEBI" id="CHEBI:30616"/>
    </ligand>
</feature>
<feature type="binding site" evidence="1">
    <location>
        <position position="421"/>
    </location>
    <ligand>
        <name>ADP</name>
        <dbReference type="ChEBI" id="CHEBI:456216"/>
    </ligand>
</feature>
<feature type="binding site" evidence="1">
    <location>
        <position position="421"/>
    </location>
    <ligand>
        <name>ATP</name>
        <dbReference type="ChEBI" id="CHEBI:30616"/>
    </ligand>
</feature>
<feature type="binding site" evidence="1">
    <location>
        <position position="425"/>
    </location>
    <ligand>
        <name>ADP</name>
        <dbReference type="ChEBI" id="CHEBI:456216"/>
    </ligand>
</feature>
<gene>
    <name evidence="1" type="primary">glpK</name>
    <name type="ordered locus">Aave_0602</name>
</gene>
<reference key="1">
    <citation type="submission" date="2006-12" db="EMBL/GenBank/DDBJ databases">
        <title>Complete sequence of Acidovorax avenae subsp. citrulli AAC00-1.</title>
        <authorList>
            <person name="Copeland A."/>
            <person name="Lucas S."/>
            <person name="Lapidus A."/>
            <person name="Barry K."/>
            <person name="Detter J.C."/>
            <person name="Glavina del Rio T."/>
            <person name="Dalin E."/>
            <person name="Tice H."/>
            <person name="Pitluck S."/>
            <person name="Kiss H."/>
            <person name="Brettin T."/>
            <person name="Bruce D."/>
            <person name="Han C."/>
            <person name="Tapia R."/>
            <person name="Gilna P."/>
            <person name="Schmutz J."/>
            <person name="Larimer F."/>
            <person name="Land M."/>
            <person name="Hauser L."/>
            <person name="Kyrpides N."/>
            <person name="Kim E."/>
            <person name="Stahl D."/>
            <person name="Richardson P."/>
        </authorList>
    </citation>
    <scope>NUCLEOTIDE SEQUENCE [LARGE SCALE GENOMIC DNA]</scope>
    <source>
        <strain>AAC00-1</strain>
    </source>
</reference>
<keyword id="KW-0067">ATP-binding</keyword>
<keyword id="KW-0319">Glycerol metabolism</keyword>
<keyword id="KW-0418">Kinase</keyword>
<keyword id="KW-0547">Nucleotide-binding</keyword>
<keyword id="KW-0808">Transferase</keyword>
<accession>A1TJR8</accession>
<evidence type="ECO:0000255" key="1">
    <source>
        <dbReference type="HAMAP-Rule" id="MF_00186"/>
    </source>
</evidence>